<gene>
    <name type="primary">CACNG2</name>
</gene>
<proteinExistence type="evidence at protein level"/>
<keyword id="KW-0002">3D-structure</keyword>
<keyword id="KW-0106">Calcium</keyword>
<keyword id="KW-0107">Calcium channel</keyword>
<keyword id="KW-0109">Calcium transport</keyword>
<keyword id="KW-0225">Disease variant</keyword>
<keyword id="KW-0325">Glycoprotein</keyword>
<keyword id="KW-0991">Intellectual disability</keyword>
<keyword id="KW-0407">Ion channel</keyword>
<keyword id="KW-0406">Ion transport</keyword>
<keyword id="KW-0472">Membrane</keyword>
<keyword id="KW-0597">Phosphoprotein</keyword>
<keyword id="KW-1267">Proteomics identification</keyword>
<keyword id="KW-1185">Reference proteome</keyword>
<keyword id="KW-0770">Synapse</keyword>
<keyword id="KW-0771">Synaptosome</keyword>
<keyword id="KW-0812">Transmembrane</keyword>
<keyword id="KW-1133">Transmembrane helix</keyword>
<keyword id="KW-0813">Transport</keyword>
<keyword id="KW-0851">Voltage-gated channel</keyword>
<dbReference type="EMBL" id="AF096322">
    <property type="protein sequence ID" value="AAD22738.1"/>
    <property type="molecule type" value="mRNA"/>
</dbReference>
<dbReference type="EMBL" id="CR456414">
    <property type="protein sequence ID" value="CAG30300.1"/>
    <property type="molecule type" value="mRNA"/>
</dbReference>
<dbReference type="EMBL" id="AL022313">
    <property type="status" value="NOT_ANNOTATED_CDS"/>
    <property type="molecule type" value="Genomic_DNA"/>
</dbReference>
<dbReference type="EMBL" id="AL031845">
    <property type="status" value="NOT_ANNOTATED_CDS"/>
    <property type="molecule type" value="Genomic_DNA"/>
</dbReference>
<dbReference type="EMBL" id="AL049749">
    <property type="status" value="NOT_ANNOTATED_CDS"/>
    <property type="molecule type" value="Genomic_DNA"/>
</dbReference>
<dbReference type="EMBL" id="BC069612">
    <property type="protein sequence ID" value="AAH69612.1"/>
    <property type="molecule type" value="mRNA"/>
</dbReference>
<dbReference type="EMBL" id="BC112297">
    <property type="protein sequence ID" value="AAI12298.1"/>
    <property type="molecule type" value="mRNA"/>
</dbReference>
<dbReference type="EMBL" id="BC112299">
    <property type="protein sequence ID" value="AAI12300.1"/>
    <property type="molecule type" value="mRNA"/>
</dbReference>
<dbReference type="CCDS" id="CCDS13931.1"/>
<dbReference type="RefSeq" id="NP_006069.1">
    <property type="nucleotide sequence ID" value="NM_006078.5"/>
</dbReference>
<dbReference type="PDB" id="6DLZ">
    <property type="method" value="EM"/>
    <property type="resolution" value="3.90 A"/>
    <property type="chains" value="A/B/C/D=2-208"/>
</dbReference>
<dbReference type="PDB" id="6DM0">
    <property type="method" value="EM"/>
    <property type="resolution" value="4.40 A"/>
    <property type="chains" value="A/B/C/D=2-208"/>
</dbReference>
<dbReference type="PDB" id="6DM1">
    <property type="method" value="EM"/>
    <property type="resolution" value="4.20 A"/>
    <property type="chains" value="A/B/C/D=2-208"/>
</dbReference>
<dbReference type="PDB" id="6O9G">
    <property type="method" value="EM"/>
    <property type="resolution" value="4.80 A"/>
    <property type="chains" value="A/B/C/D=2-208"/>
</dbReference>
<dbReference type="PDB" id="6TNO">
    <property type="method" value="X-ray"/>
    <property type="resolution" value="1.90 A"/>
    <property type="chains" value="B/D/F=225-232"/>
</dbReference>
<dbReference type="PDBsum" id="6DLZ"/>
<dbReference type="PDBsum" id="6DM0"/>
<dbReference type="PDBsum" id="6DM1"/>
<dbReference type="PDBsum" id="6O9G"/>
<dbReference type="PDBsum" id="6TNO"/>
<dbReference type="EMDB" id="EMD-7959"/>
<dbReference type="EMDB" id="EMD-7960"/>
<dbReference type="EMDB" id="EMD-7961"/>
<dbReference type="SMR" id="Q9Y698"/>
<dbReference type="BioGRID" id="115648">
    <property type="interactions" value="29"/>
</dbReference>
<dbReference type="CORUM" id="Q9Y698"/>
<dbReference type="DIP" id="DIP-48977N"/>
<dbReference type="FunCoup" id="Q9Y698">
    <property type="interactions" value="565"/>
</dbReference>
<dbReference type="IntAct" id="Q9Y698">
    <property type="interactions" value="18"/>
</dbReference>
<dbReference type="STRING" id="9606.ENSP00000300105"/>
<dbReference type="BindingDB" id="Q9Y698"/>
<dbReference type="ChEMBL" id="CHEMBL4296111"/>
<dbReference type="DrugBank" id="DB13746">
    <property type="generic name" value="Bioallethrin"/>
</dbReference>
<dbReference type="DrugBank" id="DB11148">
    <property type="generic name" value="Butamben"/>
</dbReference>
<dbReference type="DrugBank" id="DB09235">
    <property type="generic name" value="Efonidipine"/>
</dbReference>
<dbReference type="DrugBank" id="DB00228">
    <property type="generic name" value="Enflurane"/>
</dbReference>
<dbReference type="DrugBank" id="DB00153">
    <property type="generic name" value="Ergocalciferol"/>
</dbReference>
<dbReference type="DrugBank" id="DB00898">
    <property type="generic name" value="Ethanol"/>
</dbReference>
<dbReference type="DrugBank" id="DB00622">
    <property type="generic name" value="Nicardipine"/>
</dbReference>
<dbReference type="DrugBank" id="DB00661">
    <property type="generic name" value="Verapamil"/>
</dbReference>
<dbReference type="TCDB" id="8.A.16.2.1">
    <property type="family name" value="the ca(+) channel auxiliary subunit Gama1-Gama8 (ccaGama) family"/>
</dbReference>
<dbReference type="GlyCosmos" id="Q9Y698">
    <property type="glycosylation" value="1 site, No reported glycans"/>
</dbReference>
<dbReference type="GlyGen" id="Q9Y698">
    <property type="glycosylation" value="2 sites, 1 O-linked glycan (1 site)"/>
</dbReference>
<dbReference type="iPTMnet" id="Q9Y698"/>
<dbReference type="PhosphoSitePlus" id="Q9Y698"/>
<dbReference type="BioMuta" id="CACNG2"/>
<dbReference type="DMDM" id="6685289"/>
<dbReference type="MassIVE" id="Q9Y698"/>
<dbReference type="PaxDb" id="9606-ENSP00000300105"/>
<dbReference type="PeptideAtlas" id="Q9Y698"/>
<dbReference type="ProteomicsDB" id="86635"/>
<dbReference type="Antibodypedia" id="25748">
    <property type="antibodies" value="239 antibodies from 37 providers"/>
</dbReference>
<dbReference type="DNASU" id="10369"/>
<dbReference type="Ensembl" id="ENST00000300105.7">
    <property type="protein sequence ID" value="ENSP00000300105.6"/>
    <property type="gene ID" value="ENSG00000166862.7"/>
</dbReference>
<dbReference type="GeneID" id="10369"/>
<dbReference type="KEGG" id="hsa:10369"/>
<dbReference type="MANE-Select" id="ENST00000300105.7">
    <property type="protein sequence ID" value="ENSP00000300105.6"/>
    <property type="RefSeq nucleotide sequence ID" value="NM_006078.5"/>
    <property type="RefSeq protein sequence ID" value="NP_006069.1"/>
</dbReference>
<dbReference type="UCSC" id="uc003aps.3">
    <property type="organism name" value="human"/>
</dbReference>
<dbReference type="AGR" id="HGNC:1406"/>
<dbReference type="CTD" id="10369"/>
<dbReference type="DisGeNET" id="10369"/>
<dbReference type="GeneCards" id="CACNG2"/>
<dbReference type="HGNC" id="HGNC:1406">
    <property type="gene designation" value="CACNG2"/>
</dbReference>
<dbReference type="HPA" id="ENSG00000166862">
    <property type="expression patterns" value="Tissue enriched (brain)"/>
</dbReference>
<dbReference type="MalaCards" id="CACNG2"/>
<dbReference type="MIM" id="602911">
    <property type="type" value="gene"/>
</dbReference>
<dbReference type="MIM" id="614256">
    <property type="type" value="phenotype"/>
</dbReference>
<dbReference type="neXtProt" id="NX_Q9Y698"/>
<dbReference type="OpenTargets" id="ENSG00000166862"/>
<dbReference type="Orphanet" id="178469">
    <property type="disease" value="Autosomal dominant non-syndromic intellectual disability"/>
</dbReference>
<dbReference type="PharmGKB" id="PA26016"/>
<dbReference type="VEuPathDB" id="HostDB:ENSG00000166862"/>
<dbReference type="eggNOG" id="ENOG502QSNI">
    <property type="taxonomic scope" value="Eukaryota"/>
</dbReference>
<dbReference type="GeneTree" id="ENSGT01050000244893"/>
<dbReference type="HOGENOM" id="CLU_053704_0_1_1"/>
<dbReference type="InParanoid" id="Q9Y698"/>
<dbReference type="OMA" id="PEETDYQ"/>
<dbReference type="OrthoDB" id="9990458at2759"/>
<dbReference type="PAN-GO" id="Q9Y698">
    <property type="GO annotations" value="10 GO annotations based on evolutionary models"/>
</dbReference>
<dbReference type="PhylomeDB" id="Q9Y698"/>
<dbReference type="TreeFam" id="TF327980"/>
<dbReference type="PathwayCommons" id="Q9Y698"/>
<dbReference type="Reactome" id="R-HSA-112308">
    <property type="pathway name" value="Presynaptic depolarization and calcium channel opening"/>
</dbReference>
<dbReference type="Reactome" id="R-HSA-399719">
    <property type="pathway name" value="Trafficking of AMPA receptors"/>
</dbReference>
<dbReference type="Reactome" id="R-HSA-5682910">
    <property type="pathway name" value="LGI-ADAM interactions"/>
</dbReference>
<dbReference type="SignaLink" id="Q9Y698"/>
<dbReference type="SIGNOR" id="Q9Y698"/>
<dbReference type="BioGRID-ORCS" id="10369">
    <property type="hits" value="24 hits in 1141 CRISPR screens"/>
</dbReference>
<dbReference type="ChiTaRS" id="CACNG2">
    <property type="organism name" value="human"/>
</dbReference>
<dbReference type="GeneWiki" id="CACNG2"/>
<dbReference type="GenomeRNAi" id="10369"/>
<dbReference type="Pharos" id="Q9Y698">
    <property type="development level" value="Tbio"/>
</dbReference>
<dbReference type="PRO" id="PR:Q9Y698"/>
<dbReference type="Proteomes" id="UP000005640">
    <property type="component" value="Chromosome 22"/>
</dbReference>
<dbReference type="RNAct" id="Q9Y698">
    <property type="molecule type" value="protein"/>
</dbReference>
<dbReference type="Bgee" id="ENSG00000166862">
    <property type="expression patterns" value="Expressed in right hemisphere of cerebellum and 54 other cell types or tissues"/>
</dbReference>
<dbReference type="GO" id="GO:0032281">
    <property type="term" value="C:AMPA glutamate receptor complex"/>
    <property type="evidence" value="ECO:0000250"/>
    <property type="project" value="UniProtKB"/>
</dbReference>
<dbReference type="GO" id="GO:0009986">
    <property type="term" value="C:cell surface"/>
    <property type="evidence" value="ECO:0007669"/>
    <property type="project" value="Ensembl"/>
</dbReference>
<dbReference type="GO" id="GO:0044300">
    <property type="term" value="C:cerebellar mossy fiber"/>
    <property type="evidence" value="ECO:0007669"/>
    <property type="project" value="Ensembl"/>
</dbReference>
<dbReference type="GO" id="GO:0030666">
    <property type="term" value="C:endocytic vesicle membrane"/>
    <property type="evidence" value="ECO:0000304"/>
    <property type="project" value="Reactome"/>
</dbReference>
<dbReference type="GO" id="GO:0098978">
    <property type="term" value="C:glutamatergic synapse"/>
    <property type="evidence" value="ECO:0007669"/>
    <property type="project" value="Ensembl"/>
</dbReference>
<dbReference type="GO" id="GO:0098686">
    <property type="term" value="C:hippocampal mossy fiber to CA3 synapse"/>
    <property type="evidence" value="ECO:0007669"/>
    <property type="project" value="Ensembl"/>
</dbReference>
<dbReference type="GO" id="GO:0005886">
    <property type="term" value="C:plasma membrane"/>
    <property type="evidence" value="ECO:0000304"/>
    <property type="project" value="Reactome"/>
</dbReference>
<dbReference type="GO" id="GO:0098839">
    <property type="term" value="C:postsynaptic density membrane"/>
    <property type="evidence" value="ECO:0000318"/>
    <property type="project" value="GO_Central"/>
</dbReference>
<dbReference type="GO" id="GO:0098685">
    <property type="term" value="C:Schaffer collateral - CA1 synapse"/>
    <property type="evidence" value="ECO:0007669"/>
    <property type="project" value="Ensembl"/>
</dbReference>
<dbReference type="GO" id="GO:0036477">
    <property type="term" value="C:somatodendritic compartment"/>
    <property type="evidence" value="ECO:0007669"/>
    <property type="project" value="Ensembl"/>
</dbReference>
<dbReference type="GO" id="GO:0005891">
    <property type="term" value="C:voltage-gated calcium channel complex"/>
    <property type="evidence" value="ECO:0000304"/>
    <property type="project" value="ProtInc"/>
</dbReference>
<dbReference type="GO" id="GO:0016247">
    <property type="term" value="F:channel regulator activity"/>
    <property type="evidence" value="ECO:0000318"/>
    <property type="project" value="GO_Central"/>
</dbReference>
<dbReference type="GO" id="GO:0035255">
    <property type="term" value="F:ionotropic glutamate receptor binding"/>
    <property type="evidence" value="ECO:0007669"/>
    <property type="project" value="Ensembl"/>
</dbReference>
<dbReference type="GO" id="GO:0005245">
    <property type="term" value="F:voltage-gated calcium channel activity"/>
    <property type="evidence" value="ECO:0000318"/>
    <property type="project" value="GO_Central"/>
</dbReference>
<dbReference type="GO" id="GO:0060082">
    <property type="term" value="P:eye blink reflex"/>
    <property type="evidence" value="ECO:0007669"/>
    <property type="project" value="Ensembl"/>
</dbReference>
<dbReference type="GO" id="GO:0051899">
    <property type="term" value="P:membrane depolarization"/>
    <property type="evidence" value="ECO:0007669"/>
    <property type="project" value="Ensembl"/>
</dbReference>
<dbReference type="GO" id="GO:0060081">
    <property type="term" value="P:membrane hyperpolarization"/>
    <property type="evidence" value="ECO:0007669"/>
    <property type="project" value="Ensembl"/>
</dbReference>
<dbReference type="GO" id="GO:0007528">
    <property type="term" value="P:neuromuscular junction development"/>
    <property type="evidence" value="ECO:0007669"/>
    <property type="project" value="Ensembl"/>
</dbReference>
<dbReference type="GO" id="GO:0099645">
    <property type="term" value="P:neurotransmitter receptor localization to postsynaptic specialization membrane"/>
    <property type="evidence" value="ECO:0007669"/>
    <property type="project" value="Ensembl"/>
</dbReference>
<dbReference type="GO" id="GO:1904510">
    <property type="term" value="P:positive regulation of protein localization to basolateral plasma membrane"/>
    <property type="evidence" value="ECO:0007669"/>
    <property type="project" value="Ensembl"/>
</dbReference>
<dbReference type="GO" id="GO:0051968">
    <property type="term" value="P:positive regulation of synaptic transmission, glutamatergic"/>
    <property type="evidence" value="ECO:0000318"/>
    <property type="project" value="GO_Central"/>
</dbReference>
<dbReference type="GO" id="GO:0098970">
    <property type="term" value="P:postsynaptic neurotransmitter receptor diffusion trapping"/>
    <property type="evidence" value="ECO:0000318"/>
    <property type="project" value="GO_Central"/>
</dbReference>
<dbReference type="GO" id="GO:0006612">
    <property type="term" value="P:protein targeting to membrane"/>
    <property type="evidence" value="ECO:0007669"/>
    <property type="project" value="Ensembl"/>
</dbReference>
<dbReference type="GO" id="GO:2000311">
    <property type="term" value="P:regulation of AMPA receptor activity"/>
    <property type="evidence" value="ECO:0000250"/>
    <property type="project" value="UniProtKB"/>
</dbReference>
<dbReference type="GO" id="GO:0051592">
    <property type="term" value="P:response to calcium ion"/>
    <property type="evidence" value="ECO:0007669"/>
    <property type="project" value="Ensembl"/>
</dbReference>
<dbReference type="GO" id="GO:0019226">
    <property type="term" value="P:transmission of nerve impulse"/>
    <property type="evidence" value="ECO:0000318"/>
    <property type="project" value="GO_Central"/>
</dbReference>
<dbReference type="FunFam" id="1.20.140.150:FF:000002">
    <property type="entry name" value="Voltage-dependent calcium channel gamma-2 subunit"/>
    <property type="match status" value="1"/>
</dbReference>
<dbReference type="Gene3D" id="1.20.140.150">
    <property type="match status" value="1"/>
</dbReference>
<dbReference type="InterPro" id="IPR051072">
    <property type="entry name" value="CACNG_subunit"/>
</dbReference>
<dbReference type="InterPro" id="IPR004031">
    <property type="entry name" value="PMP22/EMP/MP20/Claudin"/>
</dbReference>
<dbReference type="InterPro" id="IPR005422">
    <property type="entry name" value="VDCC_g2su"/>
</dbReference>
<dbReference type="InterPro" id="IPR008368">
    <property type="entry name" value="VDCC_gsu"/>
</dbReference>
<dbReference type="PANTHER" id="PTHR12107">
    <property type="entry name" value="VOLTAGE-DEPENDENT CALCIUM CHANNEL GAMMA SUBUNIT"/>
    <property type="match status" value="1"/>
</dbReference>
<dbReference type="PANTHER" id="PTHR12107:SF1">
    <property type="entry name" value="VOLTAGE-DEPENDENT CALCIUM CHANNEL GAMMA-2 SUBUNIT"/>
    <property type="match status" value="1"/>
</dbReference>
<dbReference type="Pfam" id="PF00822">
    <property type="entry name" value="PMP22_Claudin"/>
    <property type="match status" value="1"/>
</dbReference>
<dbReference type="PRINTS" id="PR01792">
    <property type="entry name" value="VDCCGAMMA"/>
</dbReference>
<dbReference type="PRINTS" id="PR01602">
    <property type="entry name" value="VDCCGAMMA2"/>
</dbReference>
<feature type="chain" id="PRO_0000164673" description="Voltage-dependent calcium channel gamma-2 subunit">
    <location>
        <begin position="1"/>
        <end position="323"/>
    </location>
</feature>
<feature type="transmembrane region" description="Helical" evidence="3">
    <location>
        <begin position="10"/>
        <end position="30"/>
    </location>
</feature>
<feature type="transmembrane region" description="Helical" evidence="3">
    <location>
        <begin position="104"/>
        <end position="124"/>
    </location>
</feature>
<feature type="transmembrane region" description="Helical" evidence="3">
    <location>
        <begin position="134"/>
        <end position="154"/>
    </location>
</feature>
<feature type="transmembrane region" description="Helical" evidence="3">
    <location>
        <begin position="182"/>
        <end position="202"/>
    </location>
</feature>
<feature type="region of interest" description="Disordered" evidence="4">
    <location>
        <begin position="233"/>
        <end position="261"/>
    </location>
</feature>
<feature type="modified residue" description="Phosphoserine" evidence="2">
    <location>
        <position position="253"/>
    </location>
</feature>
<feature type="modified residue" description="Phosphotyrosine" evidence="1">
    <location>
        <position position="271"/>
    </location>
</feature>
<feature type="modified residue" description="Phosphothreonine" evidence="1">
    <location>
        <position position="321"/>
    </location>
</feature>
<feature type="glycosylation site" description="N-linked (GlcNAc...) asparagine" evidence="3">
    <location>
        <position position="48"/>
    </location>
</feature>
<feature type="sequence variant" id="VAR_066599" description="In MRD10; significantly reduced ability to bind GRIA1 or GRIA2 AMPARs; cell surface expression of GRIA1 is reduced in transfected hippocampal neurons and HEK293 cells producing mutant protein compared to cells producing the wild-type; dbSNP:rs1935124757." evidence="6">
    <original>V</original>
    <variation>L</variation>
    <location>
        <position position="143"/>
    </location>
</feature>
<feature type="strand" evidence="8">
    <location>
        <begin position="227"/>
        <end position="229"/>
    </location>
</feature>
<comment type="function">
    <text evidence="5">Regulates the trafficking and gating properties of AMPA-selective glutamate receptors (AMPARs). Promotes their targeting to the cell membrane and synapses and modulates their gating properties by slowing their rates of activation, deactivation and desensitization. Does not show subunit-specific AMPA receptor regulation and regulates all AMPAR subunits. Thought to stabilize the calcium channel in an inactivated (closed) state.</text>
</comment>
<comment type="subunit">
    <text evidence="2 5">The L-type calcium channel is composed of five subunits: alpha-1, alpha-2/delta, beta and gamma. Interacts with the PDZ domains of DLG4/PSD-95 and DLG1/SAP97. May interact with GOPC (By similarity). Acts as an auxiliary subunit for AMPA-selective glutamate receptors (AMPARs). Found in a complex with GRIA1, GRIA2, GRIA3, GRIA4, CNIH2, CNIH3, CACNG3, CACNG4, CACNG5, CACNG7 and CACNG8 (By similarity). Interacts with GRIA1 and GRIA2 (PubMed:20805473). Interacts with MPP2 (By similarity).</text>
</comment>
<comment type="interaction">
    <interactant intactId="EBI-6659211">
        <id>Q9Y698</id>
    </interactant>
    <interactant intactId="EBI-12052927">
        <id>O43516-4</id>
        <label>WIPF1</label>
    </interactant>
    <organismsDiffer>false</organismsDiffer>
    <experiments>3</experiments>
</comment>
<comment type="subcellular location">
    <subcellularLocation>
        <location>Membrane</location>
        <topology>Multi-pass membrane protein</topology>
    </subcellularLocation>
    <subcellularLocation>
        <location evidence="2">Synapse</location>
        <location evidence="2">Synaptosome</location>
    </subcellularLocation>
</comment>
<comment type="tissue specificity">
    <text>Brain.</text>
</comment>
<comment type="PTM">
    <text>Phosphorylation of Thr-321 impairs interaction with DLG1 and DLG4.</text>
</comment>
<comment type="disease" evidence="6">
    <disease id="DI-03253">
        <name>Intellectual developmental disorder, autosomal dominant 10</name>
        <acronym>MRD10</acronym>
        <description>A disorder characterized by significantly below average general intellectual functioning associated with impairments in adaptive behavior and manifested during the developmental period.</description>
        <dbReference type="MIM" id="614256"/>
    </disease>
    <text>The disease is caused by variants affecting the gene represented in this entry.</text>
</comment>
<comment type="similarity">
    <text evidence="7">Belongs to the PMP-22/EMP/MP20 family. CACNG subfamily.</text>
</comment>
<name>CCG2_HUMAN</name>
<organism>
    <name type="scientific">Homo sapiens</name>
    <name type="common">Human</name>
    <dbReference type="NCBI Taxonomy" id="9606"/>
    <lineage>
        <taxon>Eukaryota</taxon>
        <taxon>Metazoa</taxon>
        <taxon>Chordata</taxon>
        <taxon>Craniata</taxon>
        <taxon>Vertebrata</taxon>
        <taxon>Euteleostomi</taxon>
        <taxon>Mammalia</taxon>
        <taxon>Eutheria</taxon>
        <taxon>Euarchontoglires</taxon>
        <taxon>Primates</taxon>
        <taxon>Haplorrhini</taxon>
        <taxon>Catarrhini</taxon>
        <taxon>Hominidae</taxon>
        <taxon>Homo</taxon>
    </lineage>
</organism>
<accession>Q9Y698</accession>
<accession>Q2M1M1</accession>
<accession>Q5TGT3</accession>
<accession>Q9UGZ7</accession>
<protein>
    <recommendedName>
        <fullName>Voltage-dependent calcium channel gamma-2 subunit</fullName>
    </recommendedName>
    <alternativeName>
        <fullName>Neuronal voltage-gated calcium channel gamma-2 subunit</fullName>
    </alternativeName>
    <alternativeName>
        <fullName>Transmembrane AMPAR regulatory protein gamma-2</fullName>
        <shortName>TARP gamma-2</shortName>
    </alternativeName>
</protein>
<sequence>MGLFDRGVQMLLTTVGAFAAFSLMTIAVGTDYWLYSRGVCKTKSVSENETSKKNEEVMTHSGLWRTCCLEGNFKGLCKQIDHFPEDADYEADTAEYFLRAVRASSIFPILSVILLFMGGLCIAASEFYKTRHNIILSAGIFFVSAGLSNIIGIIVYISANAGDPSKSDSKKNSYSYGWSFYFGALSFIIAEMVGVLAVHMFIDRHKQLRATARATDYLQASAITRIPSYRYRYQRRSRSSSRSTEPSHSRDASPVGIKGFNTLPSTEISMYTLSRDPLKAATTPTATYNSDRDNSFLQVHNCIQKENKDSLHSNTANRRTTPV</sequence>
<evidence type="ECO:0000250" key="1">
    <source>
        <dbReference type="UniProtKB" id="O88602"/>
    </source>
</evidence>
<evidence type="ECO:0000250" key="2">
    <source>
        <dbReference type="UniProtKB" id="Q71RJ2"/>
    </source>
</evidence>
<evidence type="ECO:0000255" key="3"/>
<evidence type="ECO:0000256" key="4">
    <source>
        <dbReference type="SAM" id="MobiDB-lite"/>
    </source>
</evidence>
<evidence type="ECO:0000269" key="5">
    <source>
    </source>
</evidence>
<evidence type="ECO:0000269" key="6">
    <source>
    </source>
</evidence>
<evidence type="ECO:0000305" key="7"/>
<evidence type="ECO:0007829" key="8">
    <source>
        <dbReference type="PDB" id="6TNO"/>
    </source>
</evidence>
<reference key="1">
    <citation type="journal article" date="1999" name="Mayo Clin. Proc.">
        <title>Identification and cloning of putative human neuronal voltage-gated calcium channel gamma-2 and gamma-3 subunits: neurologic implications.</title>
        <authorList>
            <person name="Black J.L. III"/>
            <person name="Lennon V.A."/>
        </authorList>
    </citation>
    <scope>NUCLEOTIDE SEQUENCE [MRNA]</scope>
    <source>
        <tissue>Cerebellum</tissue>
    </source>
</reference>
<reference key="2">
    <citation type="journal article" date="2004" name="Genome Biol.">
        <title>A genome annotation-driven approach to cloning the human ORFeome.</title>
        <authorList>
            <person name="Collins J.E."/>
            <person name="Wright C.L."/>
            <person name="Edwards C.A."/>
            <person name="Davis M.P."/>
            <person name="Grinham J.A."/>
            <person name="Cole C.G."/>
            <person name="Goward M.E."/>
            <person name="Aguado B."/>
            <person name="Mallya M."/>
            <person name="Mokrab Y."/>
            <person name="Huckle E.J."/>
            <person name="Beare D.M."/>
            <person name="Dunham I."/>
        </authorList>
    </citation>
    <scope>NUCLEOTIDE SEQUENCE [LARGE SCALE MRNA]</scope>
</reference>
<reference key="3">
    <citation type="journal article" date="1999" name="Nature">
        <title>The DNA sequence of human chromosome 22.</title>
        <authorList>
            <person name="Dunham I."/>
            <person name="Hunt A.R."/>
            <person name="Collins J.E."/>
            <person name="Bruskiewich R."/>
            <person name="Beare D.M."/>
            <person name="Clamp M."/>
            <person name="Smink L.J."/>
            <person name="Ainscough R."/>
            <person name="Almeida J.P."/>
            <person name="Babbage A.K."/>
            <person name="Bagguley C."/>
            <person name="Bailey J."/>
            <person name="Barlow K.F."/>
            <person name="Bates K.N."/>
            <person name="Beasley O.P."/>
            <person name="Bird C.P."/>
            <person name="Blakey S.E."/>
            <person name="Bridgeman A.M."/>
            <person name="Buck D."/>
            <person name="Burgess J."/>
            <person name="Burrill W.D."/>
            <person name="Burton J."/>
            <person name="Carder C."/>
            <person name="Carter N.P."/>
            <person name="Chen Y."/>
            <person name="Clark G."/>
            <person name="Clegg S.M."/>
            <person name="Cobley V.E."/>
            <person name="Cole C.G."/>
            <person name="Collier R.E."/>
            <person name="Connor R."/>
            <person name="Conroy D."/>
            <person name="Corby N.R."/>
            <person name="Coville G.J."/>
            <person name="Cox A.V."/>
            <person name="Davis J."/>
            <person name="Dawson E."/>
            <person name="Dhami P.D."/>
            <person name="Dockree C."/>
            <person name="Dodsworth S.J."/>
            <person name="Durbin R.M."/>
            <person name="Ellington A.G."/>
            <person name="Evans K.L."/>
            <person name="Fey J.M."/>
            <person name="Fleming K."/>
            <person name="French L."/>
            <person name="Garner A.A."/>
            <person name="Gilbert J.G.R."/>
            <person name="Goward M.E."/>
            <person name="Grafham D.V."/>
            <person name="Griffiths M.N.D."/>
            <person name="Hall C."/>
            <person name="Hall R.E."/>
            <person name="Hall-Tamlyn G."/>
            <person name="Heathcott R.W."/>
            <person name="Ho S."/>
            <person name="Holmes S."/>
            <person name="Hunt S.E."/>
            <person name="Jones M.C."/>
            <person name="Kershaw J."/>
            <person name="Kimberley A.M."/>
            <person name="King A."/>
            <person name="Laird G.K."/>
            <person name="Langford C.F."/>
            <person name="Leversha M.A."/>
            <person name="Lloyd C."/>
            <person name="Lloyd D.M."/>
            <person name="Martyn I.D."/>
            <person name="Mashreghi-Mohammadi M."/>
            <person name="Matthews L.H."/>
            <person name="Mccann O.T."/>
            <person name="Mcclay J."/>
            <person name="Mclaren S."/>
            <person name="McMurray A.A."/>
            <person name="Milne S.A."/>
            <person name="Mortimore B.J."/>
            <person name="Odell C.N."/>
            <person name="Pavitt R."/>
            <person name="Pearce A.V."/>
            <person name="Pearson D."/>
            <person name="Phillimore B.J.C.T."/>
            <person name="Phillips S.H."/>
            <person name="Plumb R.W."/>
            <person name="Ramsay H."/>
            <person name="Ramsey Y."/>
            <person name="Rogers L."/>
            <person name="Ross M.T."/>
            <person name="Scott C.E."/>
            <person name="Sehra H.K."/>
            <person name="Skuce C.D."/>
            <person name="Smalley S."/>
            <person name="Smith M.L."/>
            <person name="Soderlund C."/>
            <person name="Spragon L."/>
            <person name="Steward C.A."/>
            <person name="Sulston J.E."/>
            <person name="Swann R.M."/>
            <person name="Vaudin M."/>
            <person name="Wall M."/>
            <person name="Wallis J.M."/>
            <person name="Whiteley M.N."/>
            <person name="Willey D.L."/>
            <person name="Williams L."/>
            <person name="Williams S.A."/>
            <person name="Williamson H."/>
            <person name="Wilmer T.E."/>
            <person name="Wilming L."/>
            <person name="Wright C.L."/>
            <person name="Hubbard T."/>
            <person name="Bentley D.R."/>
            <person name="Beck S."/>
            <person name="Rogers J."/>
            <person name="Shimizu N."/>
            <person name="Minoshima S."/>
            <person name="Kawasaki K."/>
            <person name="Sasaki T."/>
            <person name="Asakawa S."/>
            <person name="Kudoh J."/>
            <person name="Shintani A."/>
            <person name="Shibuya K."/>
            <person name="Yoshizaki Y."/>
            <person name="Aoki N."/>
            <person name="Mitsuyama S."/>
            <person name="Roe B.A."/>
            <person name="Chen F."/>
            <person name="Chu L."/>
            <person name="Crabtree J."/>
            <person name="Deschamps S."/>
            <person name="Do A."/>
            <person name="Do T."/>
            <person name="Dorman A."/>
            <person name="Fang F."/>
            <person name="Fu Y."/>
            <person name="Hu P."/>
            <person name="Hua A."/>
            <person name="Kenton S."/>
            <person name="Lai H."/>
            <person name="Lao H.I."/>
            <person name="Lewis J."/>
            <person name="Lewis S."/>
            <person name="Lin S.-P."/>
            <person name="Loh P."/>
            <person name="Malaj E."/>
            <person name="Nguyen T."/>
            <person name="Pan H."/>
            <person name="Phan S."/>
            <person name="Qi S."/>
            <person name="Qian Y."/>
            <person name="Ray L."/>
            <person name="Ren Q."/>
            <person name="Shaull S."/>
            <person name="Sloan D."/>
            <person name="Song L."/>
            <person name="Wang Q."/>
            <person name="Wang Y."/>
            <person name="Wang Z."/>
            <person name="White J."/>
            <person name="Willingham D."/>
            <person name="Wu H."/>
            <person name="Yao Z."/>
            <person name="Zhan M."/>
            <person name="Zhang G."/>
            <person name="Chissoe S."/>
            <person name="Murray J."/>
            <person name="Miller N."/>
            <person name="Minx P."/>
            <person name="Fulton R."/>
            <person name="Johnson D."/>
            <person name="Bemis G."/>
            <person name="Bentley D."/>
            <person name="Bradshaw H."/>
            <person name="Bourne S."/>
            <person name="Cordes M."/>
            <person name="Du Z."/>
            <person name="Fulton L."/>
            <person name="Goela D."/>
            <person name="Graves T."/>
            <person name="Hawkins J."/>
            <person name="Hinds K."/>
            <person name="Kemp K."/>
            <person name="Latreille P."/>
            <person name="Layman D."/>
            <person name="Ozersky P."/>
            <person name="Rohlfing T."/>
            <person name="Scheet P."/>
            <person name="Walker C."/>
            <person name="Wamsley A."/>
            <person name="Wohldmann P."/>
            <person name="Pepin K."/>
            <person name="Nelson J."/>
            <person name="Korf I."/>
            <person name="Bedell J.A."/>
            <person name="Hillier L.W."/>
            <person name="Mardis E."/>
            <person name="Waterston R."/>
            <person name="Wilson R."/>
            <person name="Emanuel B.S."/>
            <person name="Shaikh T."/>
            <person name="Kurahashi H."/>
            <person name="Saitta S."/>
            <person name="Budarf M.L."/>
            <person name="McDermid H.E."/>
            <person name="Johnson A."/>
            <person name="Wong A.C.C."/>
            <person name="Morrow B.E."/>
            <person name="Edelmann L."/>
            <person name="Kim U.J."/>
            <person name="Shizuya H."/>
            <person name="Simon M.I."/>
            <person name="Dumanski J.P."/>
            <person name="Peyrard M."/>
            <person name="Kedra D."/>
            <person name="Seroussi E."/>
            <person name="Fransson I."/>
            <person name="Tapia I."/>
            <person name="Bruder C.E."/>
            <person name="O'Brien K.P."/>
            <person name="Wilkinson P."/>
            <person name="Bodenteich A."/>
            <person name="Hartman K."/>
            <person name="Hu X."/>
            <person name="Khan A.S."/>
            <person name="Lane L."/>
            <person name="Tilahun Y."/>
            <person name="Wright H."/>
        </authorList>
    </citation>
    <scope>NUCLEOTIDE SEQUENCE [LARGE SCALE GENOMIC DNA]</scope>
</reference>
<reference key="4">
    <citation type="journal article" date="2004" name="Genome Res.">
        <title>The status, quality, and expansion of the NIH full-length cDNA project: the Mammalian Gene Collection (MGC).</title>
        <authorList>
            <consortium name="The MGC Project Team"/>
        </authorList>
    </citation>
    <scope>NUCLEOTIDE SEQUENCE [LARGE SCALE MRNA]</scope>
</reference>
<reference key="5">
    <citation type="journal article" date="2010" name="Proc. Natl. Acad. Sci. U.S.A.">
        <title>Functional comparison of the effects of TARPs and cornichons on AMPA receptor trafficking and gating.</title>
        <authorList>
            <person name="Shi Y."/>
            <person name="Suh Y.H."/>
            <person name="Milstein A.D."/>
            <person name="Isozaki K."/>
            <person name="Schmid S.M."/>
            <person name="Roche K.W."/>
            <person name="Nicoll R.A."/>
        </authorList>
    </citation>
    <scope>FUNCTION</scope>
    <scope>INTERACTION WITH GRIA1</scope>
</reference>
<reference key="6">
    <citation type="journal article" date="2018" name="Neuron">
        <title>Mechanisms of channel block in calcium-permeable AMPA receptors.</title>
        <authorList>
            <person name="Twomey E.C."/>
            <person name="Yelshanskaya M.V."/>
            <person name="Vassilevski A.A."/>
            <person name="Sobolevsky A.I."/>
        </authorList>
    </citation>
    <scope>STRUCTURE BY ELECTRON MICROSCOPY (3.90 ANGSTROMS) OF 2-208</scope>
</reference>
<reference key="7">
    <citation type="journal article" date="2011" name="Am. J. Hum. Genet.">
        <title>Excess of de novo deleterious mutations in genes associated with glutamatergic systems in nonsyndromic intellectual disability.</title>
        <authorList>
            <person name="Hamdan F.F."/>
            <person name="Gauthier J."/>
            <person name="Araki Y."/>
            <person name="Lin D.T."/>
            <person name="Yoshizawa Y."/>
            <person name="Higashi K."/>
            <person name="Park A.R."/>
            <person name="Spiegelman D."/>
            <person name="Dobrzeniecka S."/>
            <person name="Piton A."/>
            <person name="Tomitori H."/>
            <person name="Daoud H."/>
            <person name="Massicotte C."/>
            <person name="Henrion E."/>
            <person name="Diallo O."/>
            <person name="Shekarabi M."/>
            <person name="Marineau C."/>
            <person name="Shevell M."/>
            <person name="Maranda B."/>
            <person name="Mitchell G."/>
            <person name="Nadeau A."/>
            <person name="D'Anjou G."/>
            <person name="Vanasse M."/>
            <person name="Srour M."/>
            <person name="Lafreniere R.G."/>
            <person name="Drapeau P."/>
            <person name="Lacaille J.C."/>
            <person name="Kim E."/>
            <person name="Lee J.R."/>
            <person name="Igarashi K."/>
            <person name="Huganir R.L."/>
            <person name="Rouleau G.A."/>
            <person name="Michaud J.L."/>
        </authorList>
    </citation>
    <scope>VARIANT MRD10 LEU-143</scope>
    <scope>CHARACTERIZATION OF VARIANT MRD10 LEU-143</scope>
</reference>